<comment type="function">
    <text evidence="1">A key translational regulator that binds mRNA to regulate translation initiation and/or mRNA stability. Mediates global changes in gene expression, shifting from rapid growth to stress survival by linking envelope stress, the stringent response and the catabolite repression systems. Usually binds in the 5'-UTR; binding at or near the Shine-Dalgarno sequence prevents ribosome-binding, repressing translation, binding elsewhere in the 5'-UTR can activate translation and/or stabilize the mRNA. Its function is antagonized by small RNA(s).</text>
</comment>
<comment type="subunit">
    <text evidence="1">Homodimer; the beta-strands of each monomer intercalate to form a hydrophobic core, while the alpha-helices form wings that extend away from the core.</text>
</comment>
<comment type="subcellular location">
    <subcellularLocation>
        <location evidence="1">Cytoplasm</location>
    </subcellularLocation>
</comment>
<comment type="similarity">
    <text evidence="1">Belongs to the CsrA/RsmA family.</text>
</comment>
<keyword id="KW-0010">Activator</keyword>
<keyword id="KW-0963">Cytoplasm</keyword>
<keyword id="KW-1185">Reference proteome</keyword>
<keyword id="KW-0678">Repressor</keyword>
<keyword id="KW-0694">RNA-binding</keyword>
<keyword id="KW-0810">Translation regulation</keyword>
<sequence>MLILTRKVGETVLIGDDISITVLNIRGNQVKIGIEAPKDVTVHREEIYERIKLAAEDNNHV</sequence>
<feature type="chain" id="PRO_1000071567" description="Translational regulator CsrA">
    <location>
        <begin position="1"/>
        <end position="61"/>
    </location>
</feature>
<organism>
    <name type="scientific">Actinobacillus succinogenes (strain ATCC 55618 / DSM 22257 / CCUG 43843 / 130Z)</name>
    <dbReference type="NCBI Taxonomy" id="339671"/>
    <lineage>
        <taxon>Bacteria</taxon>
        <taxon>Pseudomonadati</taxon>
        <taxon>Pseudomonadota</taxon>
        <taxon>Gammaproteobacteria</taxon>
        <taxon>Pasteurellales</taxon>
        <taxon>Pasteurellaceae</taxon>
        <taxon>Actinobacillus</taxon>
    </lineage>
</organism>
<protein>
    <recommendedName>
        <fullName evidence="1">Translational regulator CsrA</fullName>
    </recommendedName>
    <alternativeName>
        <fullName evidence="1">Carbon storage regulator</fullName>
    </alternativeName>
</protein>
<name>CSRA_ACTSZ</name>
<dbReference type="EMBL" id="CP000746">
    <property type="protein sequence ID" value="ABR73432.1"/>
    <property type="molecule type" value="Genomic_DNA"/>
</dbReference>
<dbReference type="RefSeq" id="WP_011978708.1">
    <property type="nucleotide sequence ID" value="NC_009655.1"/>
</dbReference>
<dbReference type="SMR" id="A6VKD5"/>
<dbReference type="STRING" id="339671.Asuc_0051"/>
<dbReference type="KEGG" id="asu:Asuc_0051"/>
<dbReference type="eggNOG" id="COG1551">
    <property type="taxonomic scope" value="Bacteria"/>
</dbReference>
<dbReference type="HOGENOM" id="CLU_164837_2_1_6"/>
<dbReference type="OrthoDB" id="9809061at2"/>
<dbReference type="Proteomes" id="UP000001114">
    <property type="component" value="Chromosome"/>
</dbReference>
<dbReference type="GO" id="GO:0005829">
    <property type="term" value="C:cytosol"/>
    <property type="evidence" value="ECO:0007669"/>
    <property type="project" value="TreeGrafter"/>
</dbReference>
<dbReference type="GO" id="GO:0048027">
    <property type="term" value="F:mRNA 5'-UTR binding"/>
    <property type="evidence" value="ECO:0007669"/>
    <property type="project" value="UniProtKB-UniRule"/>
</dbReference>
<dbReference type="GO" id="GO:0006402">
    <property type="term" value="P:mRNA catabolic process"/>
    <property type="evidence" value="ECO:0007669"/>
    <property type="project" value="InterPro"/>
</dbReference>
<dbReference type="GO" id="GO:0045947">
    <property type="term" value="P:negative regulation of translational initiation"/>
    <property type="evidence" value="ECO:0007669"/>
    <property type="project" value="UniProtKB-UniRule"/>
</dbReference>
<dbReference type="GO" id="GO:0045948">
    <property type="term" value="P:positive regulation of translational initiation"/>
    <property type="evidence" value="ECO:0007669"/>
    <property type="project" value="UniProtKB-UniRule"/>
</dbReference>
<dbReference type="GO" id="GO:0006109">
    <property type="term" value="P:regulation of carbohydrate metabolic process"/>
    <property type="evidence" value="ECO:0007669"/>
    <property type="project" value="UniProtKB-UniRule"/>
</dbReference>
<dbReference type="FunFam" id="2.60.40.4380:FF:000001">
    <property type="entry name" value="Translational regulator CsrA"/>
    <property type="match status" value="1"/>
</dbReference>
<dbReference type="Gene3D" id="2.60.40.4380">
    <property type="entry name" value="Translational regulator CsrA"/>
    <property type="match status" value="1"/>
</dbReference>
<dbReference type="HAMAP" id="MF_00167">
    <property type="entry name" value="CsrA"/>
    <property type="match status" value="1"/>
</dbReference>
<dbReference type="InterPro" id="IPR003751">
    <property type="entry name" value="CsrA"/>
</dbReference>
<dbReference type="InterPro" id="IPR036107">
    <property type="entry name" value="CsrA_sf"/>
</dbReference>
<dbReference type="NCBIfam" id="TIGR00202">
    <property type="entry name" value="csrA"/>
    <property type="match status" value="1"/>
</dbReference>
<dbReference type="NCBIfam" id="NF002469">
    <property type="entry name" value="PRK01712.1"/>
    <property type="match status" value="1"/>
</dbReference>
<dbReference type="PANTHER" id="PTHR34984">
    <property type="entry name" value="CARBON STORAGE REGULATOR"/>
    <property type="match status" value="1"/>
</dbReference>
<dbReference type="PANTHER" id="PTHR34984:SF1">
    <property type="entry name" value="CARBON STORAGE REGULATOR"/>
    <property type="match status" value="1"/>
</dbReference>
<dbReference type="Pfam" id="PF02599">
    <property type="entry name" value="CsrA"/>
    <property type="match status" value="1"/>
</dbReference>
<dbReference type="SUPFAM" id="SSF117130">
    <property type="entry name" value="CsrA-like"/>
    <property type="match status" value="1"/>
</dbReference>
<accession>A6VKD5</accession>
<proteinExistence type="inferred from homology"/>
<reference key="1">
    <citation type="journal article" date="2010" name="BMC Genomics">
        <title>A genomic perspective on the potential of Actinobacillus succinogenes for industrial succinate production.</title>
        <authorList>
            <person name="McKinlay J.B."/>
            <person name="Laivenieks M."/>
            <person name="Schindler B.D."/>
            <person name="McKinlay A.A."/>
            <person name="Siddaramappa S."/>
            <person name="Challacombe J.F."/>
            <person name="Lowry S.R."/>
            <person name="Clum A."/>
            <person name="Lapidus A.L."/>
            <person name="Burkhart K.B."/>
            <person name="Harkins V."/>
            <person name="Vieille C."/>
        </authorList>
    </citation>
    <scope>NUCLEOTIDE SEQUENCE [LARGE SCALE GENOMIC DNA]</scope>
    <source>
        <strain>ATCC 55618 / DSM 22257 / CCUG 43843 / 130Z</strain>
    </source>
</reference>
<gene>
    <name evidence="1" type="primary">csrA</name>
    <name type="ordered locus">Asuc_0051</name>
</gene>
<evidence type="ECO:0000255" key="1">
    <source>
        <dbReference type="HAMAP-Rule" id="MF_00167"/>
    </source>
</evidence>